<evidence type="ECO:0000250" key="1">
    <source>
        <dbReference type="UniProtKB" id="P03905"/>
    </source>
</evidence>
<evidence type="ECO:0000250" key="2">
    <source>
        <dbReference type="UniProtKB" id="P03910"/>
    </source>
</evidence>
<evidence type="ECO:0000255" key="3"/>
<evidence type="ECO:0000305" key="4"/>
<geneLocation type="mitochondrion"/>
<comment type="function">
    <text evidence="1">Core subunit of the mitochondrial membrane respiratory chain NADH dehydrogenase (Complex I) which catalyzes electron transfer from NADH through the respiratory chain, using ubiquinone as an electron acceptor. Essential for the catalytic activity and assembly of complex I.</text>
</comment>
<comment type="catalytic activity">
    <reaction evidence="1">
        <text>a ubiquinone + NADH + 5 H(+)(in) = a ubiquinol + NAD(+) + 4 H(+)(out)</text>
        <dbReference type="Rhea" id="RHEA:29091"/>
        <dbReference type="Rhea" id="RHEA-COMP:9565"/>
        <dbReference type="Rhea" id="RHEA-COMP:9566"/>
        <dbReference type="ChEBI" id="CHEBI:15378"/>
        <dbReference type="ChEBI" id="CHEBI:16389"/>
        <dbReference type="ChEBI" id="CHEBI:17976"/>
        <dbReference type="ChEBI" id="CHEBI:57540"/>
        <dbReference type="ChEBI" id="CHEBI:57945"/>
        <dbReference type="EC" id="7.1.1.2"/>
    </reaction>
</comment>
<comment type="subunit">
    <text evidence="2">Core subunit of respiratory chain NADH dehydrogenase (Complex I) which is composed of 45 different subunits.</text>
</comment>
<comment type="subcellular location">
    <subcellularLocation>
        <location evidence="2">Mitochondrion inner membrane</location>
        <topology evidence="3">Multi-pass membrane protein</topology>
    </subcellularLocation>
</comment>
<comment type="similarity">
    <text evidence="4">Belongs to the complex I subunit 4 family.</text>
</comment>
<proteinExistence type="inferred from homology"/>
<feature type="chain" id="PRO_0000117927" description="NADH-ubiquinone oxidoreductase chain 4">
    <location>
        <begin position="1"/>
        <end position="459"/>
    </location>
</feature>
<feature type="transmembrane region" description="Helical" evidence="3">
    <location>
        <begin position="23"/>
        <end position="43"/>
    </location>
</feature>
<feature type="transmembrane region" description="Helical" evidence="3">
    <location>
        <begin position="60"/>
        <end position="80"/>
    </location>
</feature>
<feature type="transmembrane region" description="Helical" evidence="3">
    <location>
        <begin position="92"/>
        <end position="112"/>
    </location>
</feature>
<feature type="transmembrane region" description="Helical" evidence="3">
    <location>
        <begin position="113"/>
        <end position="133"/>
    </location>
</feature>
<feature type="transmembrane region" description="Helical" evidence="3">
    <location>
        <begin position="145"/>
        <end position="165"/>
    </location>
</feature>
<feature type="transmembrane region" description="Helical" evidence="3">
    <location>
        <begin position="196"/>
        <end position="216"/>
    </location>
</feature>
<feature type="transmembrane region" description="Helical" evidence="3">
    <location>
        <begin position="224"/>
        <end position="244"/>
    </location>
</feature>
<feature type="transmembrane region" description="Helical" evidence="3">
    <location>
        <begin position="257"/>
        <end position="277"/>
    </location>
</feature>
<feature type="transmembrane region" description="Helical" evidence="3">
    <location>
        <begin position="284"/>
        <end position="303"/>
    </location>
</feature>
<feature type="transmembrane region" description="Helical" evidence="3">
    <location>
        <begin position="308"/>
        <end position="330"/>
    </location>
</feature>
<feature type="transmembrane region" description="Helical" evidence="3">
    <location>
        <begin position="351"/>
        <end position="371"/>
    </location>
</feature>
<feature type="transmembrane region" description="Helical" evidence="3">
    <location>
        <begin position="392"/>
        <end position="412"/>
    </location>
</feature>
<feature type="transmembrane region" description="Helical" evidence="3">
    <location>
        <begin position="436"/>
        <end position="456"/>
    </location>
</feature>
<organism>
    <name type="scientific">Dasypus novemcinctus</name>
    <name type="common">Nine-banded armadillo</name>
    <dbReference type="NCBI Taxonomy" id="9361"/>
    <lineage>
        <taxon>Eukaryota</taxon>
        <taxon>Metazoa</taxon>
        <taxon>Chordata</taxon>
        <taxon>Craniata</taxon>
        <taxon>Vertebrata</taxon>
        <taxon>Euteleostomi</taxon>
        <taxon>Mammalia</taxon>
        <taxon>Eutheria</taxon>
        <taxon>Xenarthra</taxon>
        <taxon>Cingulata</taxon>
        <taxon>Dasypodidae</taxon>
        <taxon>Dasypus</taxon>
    </lineage>
</organism>
<keyword id="KW-0249">Electron transport</keyword>
<keyword id="KW-0472">Membrane</keyword>
<keyword id="KW-0496">Mitochondrion</keyword>
<keyword id="KW-0999">Mitochondrion inner membrane</keyword>
<keyword id="KW-0520">NAD</keyword>
<keyword id="KW-0679">Respiratory chain</keyword>
<keyword id="KW-1278">Translocase</keyword>
<keyword id="KW-0812">Transmembrane</keyword>
<keyword id="KW-1133">Transmembrane helix</keyword>
<keyword id="KW-0813">Transport</keyword>
<keyword id="KW-0830">Ubiquinone</keyword>
<name>NU4M_DASNO</name>
<dbReference type="EC" id="7.1.1.2" evidence="1"/>
<dbReference type="EMBL" id="Y11832">
    <property type="protein sequence ID" value="CAA72520.1"/>
    <property type="molecule type" value="Genomic_DNA"/>
</dbReference>
<dbReference type="PIR" id="T11450">
    <property type="entry name" value="T11450"/>
</dbReference>
<dbReference type="RefSeq" id="NP_007468.1">
    <property type="nucleotide sequence ID" value="NC_001821.1"/>
</dbReference>
<dbReference type="SMR" id="O21334"/>
<dbReference type="GeneID" id="808133"/>
<dbReference type="KEGG" id="dnm:808133"/>
<dbReference type="CTD" id="4538"/>
<dbReference type="HOGENOM" id="CLU_007100_4_0_1"/>
<dbReference type="OMA" id="ITRWGNQ"/>
<dbReference type="GO" id="GO:0005743">
    <property type="term" value="C:mitochondrial inner membrane"/>
    <property type="evidence" value="ECO:0000250"/>
    <property type="project" value="UniProtKB"/>
</dbReference>
<dbReference type="GO" id="GO:0045271">
    <property type="term" value="C:respiratory chain complex I"/>
    <property type="evidence" value="ECO:0007669"/>
    <property type="project" value="Ensembl"/>
</dbReference>
<dbReference type="GO" id="GO:0008137">
    <property type="term" value="F:NADH dehydrogenase (ubiquinone) activity"/>
    <property type="evidence" value="ECO:0000250"/>
    <property type="project" value="UniProtKB"/>
</dbReference>
<dbReference type="GO" id="GO:0048039">
    <property type="term" value="F:ubiquinone binding"/>
    <property type="evidence" value="ECO:0007669"/>
    <property type="project" value="TreeGrafter"/>
</dbReference>
<dbReference type="GO" id="GO:0015990">
    <property type="term" value="P:electron transport coupled proton transport"/>
    <property type="evidence" value="ECO:0007669"/>
    <property type="project" value="TreeGrafter"/>
</dbReference>
<dbReference type="GO" id="GO:0006120">
    <property type="term" value="P:mitochondrial electron transport, NADH to ubiquinone"/>
    <property type="evidence" value="ECO:0000250"/>
    <property type="project" value="UniProtKB"/>
</dbReference>
<dbReference type="GO" id="GO:0032981">
    <property type="term" value="P:mitochondrial respiratory chain complex I assembly"/>
    <property type="evidence" value="ECO:0000250"/>
    <property type="project" value="UniProtKB"/>
</dbReference>
<dbReference type="InterPro" id="IPR000260">
    <property type="entry name" value="NADH4_N"/>
</dbReference>
<dbReference type="InterPro" id="IPR010227">
    <property type="entry name" value="NADH_Q_OxRdtase_chainM/4"/>
</dbReference>
<dbReference type="InterPro" id="IPR003918">
    <property type="entry name" value="NADH_UbQ_OxRdtase"/>
</dbReference>
<dbReference type="InterPro" id="IPR001750">
    <property type="entry name" value="ND/Mrp_TM"/>
</dbReference>
<dbReference type="NCBIfam" id="TIGR01972">
    <property type="entry name" value="NDH_I_M"/>
    <property type="match status" value="1"/>
</dbReference>
<dbReference type="PANTHER" id="PTHR43507">
    <property type="entry name" value="NADH-UBIQUINONE OXIDOREDUCTASE CHAIN 4"/>
    <property type="match status" value="1"/>
</dbReference>
<dbReference type="PANTHER" id="PTHR43507:SF20">
    <property type="entry name" value="NADH-UBIQUINONE OXIDOREDUCTASE CHAIN 4"/>
    <property type="match status" value="1"/>
</dbReference>
<dbReference type="Pfam" id="PF01059">
    <property type="entry name" value="Oxidored_q5_N"/>
    <property type="match status" value="1"/>
</dbReference>
<dbReference type="Pfam" id="PF00361">
    <property type="entry name" value="Proton_antipo_M"/>
    <property type="match status" value="1"/>
</dbReference>
<dbReference type="PRINTS" id="PR01437">
    <property type="entry name" value="NUOXDRDTASE4"/>
</dbReference>
<protein>
    <recommendedName>
        <fullName>NADH-ubiquinone oxidoreductase chain 4</fullName>
        <ecNumber evidence="1">7.1.1.2</ecNumber>
    </recommendedName>
    <alternativeName>
        <fullName>NADH dehydrogenase subunit 4</fullName>
    </alternativeName>
</protein>
<gene>
    <name type="primary">MT-ND4</name>
    <name type="synonym">MTND4</name>
    <name type="synonym">NADH4</name>
    <name type="synonym">ND4</name>
</gene>
<reference key="1">
    <citation type="journal article" date="1997" name="Mol. Biol. Evol.">
        <title>Phylogenetic analyses of mitochondrial DNA suggest a sister group relationship between Xenarthra (Edentata) and Ferungulates.</title>
        <authorList>
            <person name="Arnason U."/>
            <person name="Gullberg A."/>
            <person name="Janke A."/>
        </authorList>
    </citation>
    <scope>NUCLEOTIDE SEQUENCE [GENOMIC DNA]</scope>
</reference>
<sequence>MLKLIMPTIMLIPLTWLSKKNMVWINSTTHSILISLISLSMLFQTTDSNMNFSLMFFADPLSTPLIILTTWLLPLMIIASQSHLIKETTTRKKLYISMLITLQALLIMTFSATELILFYILFEATLIPTLILITRWGNQTERLNAGFYFLFYTLAGSLPLLVILLYMQNTMGSLNMLLIQYFPQTLTHTWTAKLMWLACMMAFMVKMPLYGLHLWLPKAHVEAPIAGSMVLAAILLKLGGYGMMRITMILEPTTTSMSYPFMMLSLWGMVMTTRICLRQTDLKSLIAYSSVSHMALVIMAILIQTPWSYMGATALMIAHGLTSSMLFCLANTNYERTHSRTMILARGLQTLLPLMASWWLLASLTNLALPPTINLIGELLVTMTTFKWSNLTILALGLNMLITALYSLYMLITTQRGKFTYHTYSIKPTFTRESTLMLMHLLPIMLLSINPKIILGPLY</sequence>
<accession>O21334</accession>